<evidence type="ECO:0000255" key="1"/>
<accession>Q58534</accession>
<protein>
    <recommendedName>
        <fullName>Uncharacterized protein MJ1134</fullName>
    </recommendedName>
</protein>
<keyword id="KW-0175">Coiled coil</keyword>
<keyword id="KW-1185">Reference proteome</keyword>
<reference key="1">
    <citation type="journal article" date="1996" name="Science">
        <title>Complete genome sequence of the methanogenic archaeon, Methanococcus jannaschii.</title>
        <authorList>
            <person name="Bult C.J."/>
            <person name="White O."/>
            <person name="Olsen G.J."/>
            <person name="Zhou L."/>
            <person name="Fleischmann R.D."/>
            <person name="Sutton G.G."/>
            <person name="Blake J.A."/>
            <person name="FitzGerald L.M."/>
            <person name="Clayton R.A."/>
            <person name="Gocayne J.D."/>
            <person name="Kerlavage A.R."/>
            <person name="Dougherty B.A."/>
            <person name="Tomb J.-F."/>
            <person name="Adams M.D."/>
            <person name="Reich C.I."/>
            <person name="Overbeek R."/>
            <person name="Kirkness E.F."/>
            <person name="Weinstock K.G."/>
            <person name="Merrick J.M."/>
            <person name="Glodek A."/>
            <person name="Scott J.L."/>
            <person name="Geoghagen N.S.M."/>
            <person name="Weidman J.F."/>
            <person name="Fuhrmann J.L."/>
            <person name="Nguyen D."/>
            <person name="Utterback T.R."/>
            <person name="Kelley J.M."/>
            <person name="Peterson J.D."/>
            <person name="Sadow P.W."/>
            <person name="Hanna M.C."/>
            <person name="Cotton M.D."/>
            <person name="Roberts K.M."/>
            <person name="Hurst M.A."/>
            <person name="Kaine B.P."/>
            <person name="Borodovsky M."/>
            <person name="Klenk H.-P."/>
            <person name="Fraser C.M."/>
            <person name="Smith H.O."/>
            <person name="Woese C.R."/>
            <person name="Venter J.C."/>
        </authorList>
    </citation>
    <scope>NUCLEOTIDE SEQUENCE [LARGE SCALE GENOMIC DNA]</scope>
    <source>
        <strain>ATCC 43067 / DSM 2661 / JAL-1 / JCM 10045 / NBRC 100440</strain>
    </source>
</reference>
<dbReference type="EMBL" id="L77117">
    <property type="protein sequence ID" value="AAB99136.1"/>
    <property type="molecule type" value="Genomic_DNA"/>
</dbReference>
<dbReference type="PIR" id="E64441">
    <property type="entry name" value="E64441"/>
</dbReference>
<dbReference type="RefSeq" id="WP_010870645.1">
    <property type="nucleotide sequence ID" value="NC_000909.1"/>
</dbReference>
<dbReference type="SMR" id="Q58534"/>
<dbReference type="STRING" id="243232.MJ_1134"/>
<dbReference type="PaxDb" id="243232-MJ_1134"/>
<dbReference type="EnsemblBacteria" id="AAB99136">
    <property type="protein sequence ID" value="AAB99136"/>
    <property type="gene ID" value="MJ_1134"/>
</dbReference>
<dbReference type="GeneID" id="1452030"/>
<dbReference type="KEGG" id="mja:MJ_1134"/>
<dbReference type="eggNOG" id="arCOG02610">
    <property type="taxonomic scope" value="Archaea"/>
</dbReference>
<dbReference type="HOGENOM" id="CLU_070251_1_1_2"/>
<dbReference type="InParanoid" id="Q58534"/>
<dbReference type="OrthoDB" id="53244at2157"/>
<dbReference type="PhylomeDB" id="Q58534"/>
<dbReference type="Proteomes" id="UP000000805">
    <property type="component" value="Chromosome"/>
</dbReference>
<dbReference type="Gene3D" id="6.10.250.2410">
    <property type="match status" value="1"/>
</dbReference>
<dbReference type="Gene3D" id="1.10.10.580">
    <property type="entry name" value="Structural maintenance of chromosome 1. Chain E"/>
    <property type="match status" value="1"/>
</dbReference>
<dbReference type="InterPro" id="IPR003768">
    <property type="entry name" value="ScpA"/>
</dbReference>
<dbReference type="InterPro" id="IPR023093">
    <property type="entry name" value="ScpA-like_C"/>
</dbReference>
<dbReference type="PANTHER" id="PTHR33969">
    <property type="entry name" value="SEGREGATION AND CONDENSATION PROTEIN A"/>
    <property type="match status" value="1"/>
</dbReference>
<dbReference type="PANTHER" id="PTHR33969:SF2">
    <property type="entry name" value="SEGREGATION AND CONDENSATION PROTEIN A"/>
    <property type="match status" value="1"/>
</dbReference>
<dbReference type="Pfam" id="PF02616">
    <property type="entry name" value="SMC_ScpA"/>
    <property type="match status" value="1"/>
</dbReference>
<organism>
    <name type="scientific">Methanocaldococcus jannaschii (strain ATCC 43067 / DSM 2661 / JAL-1 / JCM 10045 / NBRC 100440)</name>
    <name type="common">Methanococcus jannaschii</name>
    <dbReference type="NCBI Taxonomy" id="243232"/>
    <lineage>
        <taxon>Archaea</taxon>
        <taxon>Methanobacteriati</taxon>
        <taxon>Methanobacteriota</taxon>
        <taxon>Methanomada group</taxon>
        <taxon>Methanococci</taxon>
        <taxon>Methanococcales</taxon>
        <taxon>Methanocaldococcaceae</taxon>
        <taxon>Methanocaldococcus</taxon>
    </lineage>
</organism>
<feature type="chain" id="PRO_0000107182" description="Uncharacterized protein MJ1134">
    <location>
        <begin position="1"/>
        <end position="226"/>
    </location>
</feature>
<feature type="coiled-coil region" evidence="1">
    <location>
        <begin position="121"/>
        <end position="163"/>
    </location>
</feature>
<gene>
    <name type="ordered locus">MJ1134</name>
</gene>
<name>Y1134_METJA</name>
<sequence>MIDSNFDIVLWVRMIKEGIEKKNLNPWDVNIAEIADYYIQKIKELKKFDIRLSADVILVAGILLRMKSEALYDECKVEEEEDYDYCDDYYDYDDIEEKPKKGKKKEKEDKDKNKKSKKPVTVDELIKTIEKELNKVKKSRKNREKKTNEVEEIIEELIEEDDISDIIAELLDDLMKEGIIVYQEKFKTREDRVRYFIPSLYLANDGKAELIQEKLFGELIIKLKSF</sequence>
<proteinExistence type="predicted"/>